<protein>
    <recommendedName>
        <fullName evidence="9">RNA-binding protein pos-1</fullName>
    </recommendedName>
    <alternativeName>
        <fullName evidence="13">Posterior segregation protein pos-1</fullName>
    </alternativeName>
    <alternativeName>
        <fullName evidence="9">Zinc-finger protein pos-1</fullName>
    </alternativeName>
</protein>
<accession>G5EF15</accession>
<gene>
    <name evidence="13" type="primary">pos-1</name>
    <name evidence="13" type="ORF">F52E1.1</name>
</gene>
<organism evidence="12">
    <name type="scientific">Caenorhabditis elegans</name>
    <dbReference type="NCBI Taxonomy" id="6239"/>
    <lineage>
        <taxon>Eukaryota</taxon>
        <taxon>Metazoa</taxon>
        <taxon>Ecdysozoa</taxon>
        <taxon>Nematoda</taxon>
        <taxon>Chromadorea</taxon>
        <taxon>Rhabditida</taxon>
        <taxon>Rhabditina</taxon>
        <taxon>Rhabditomorpha</taxon>
        <taxon>Rhabditoidea</taxon>
        <taxon>Rhabditidae</taxon>
        <taxon>Peloderinae</taxon>
        <taxon>Caenorhabditis</taxon>
    </lineage>
</organism>
<keyword id="KW-0002">3D-structure</keyword>
<keyword id="KW-0963">Cytoplasm</keyword>
<keyword id="KW-0217">Developmental protein</keyword>
<keyword id="KW-0221">Differentiation</keyword>
<keyword id="KW-0479">Metal-binding</keyword>
<keyword id="KW-1185">Reference proteome</keyword>
<keyword id="KW-0677">Repeat</keyword>
<keyword id="KW-0694">RNA-binding</keyword>
<keyword id="KW-0810">Translation regulation</keyword>
<keyword id="KW-0862">Zinc</keyword>
<keyword id="KW-0863">Zinc-finger</keyword>
<feature type="chain" id="PRO_0000458120" description="RNA-binding protein pos-1">
    <location>
        <begin position="1"/>
        <end position="264"/>
    </location>
</feature>
<feature type="zinc finger region" description="C3H1-type 1" evidence="1">
    <location>
        <begin position="98"/>
        <end position="126"/>
    </location>
</feature>
<feature type="zinc finger region" description="C3H1-type 2" evidence="1">
    <location>
        <begin position="141"/>
        <end position="169"/>
    </location>
</feature>
<feature type="region of interest" description="Disordered" evidence="2">
    <location>
        <begin position="56"/>
        <end position="82"/>
    </location>
</feature>
<feature type="compositionally biased region" description="Polar residues" evidence="2">
    <location>
        <begin position="61"/>
        <end position="74"/>
    </location>
</feature>
<feature type="binding site" evidence="8 11">
    <location>
        <position position="104"/>
    </location>
    <ligand>
        <name>Zn(2+)</name>
        <dbReference type="ChEBI" id="CHEBI:29105"/>
        <label>1</label>
    </ligand>
</feature>
<feature type="binding site" evidence="8 11">
    <location>
        <position position="113"/>
    </location>
    <ligand>
        <name>Zn(2+)</name>
        <dbReference type="ChEBI" id="CHEBI:29105"/>
        <label>1</label>
    </ligand>
</feature>
<feature type="binding site" evidence="8 11">
    <location>
        <position position="119"/>
    </location>
    <ligand>
        <name>Zn(2+)</name>
        <dbReference type="ChEBI" id="CHEBI:29105"/>
        <label>1</label>
    </ligand>
</feature>
<feature type="binding site" evidence="8 11">
    <location>
        <position position="123"/>
    </location>
    <ligand>
        <name>Zn(2+)</name>
        <dbReference type="ChEBI" id="CHEBI:29105"/>
        <label>1</label>
    </ligand>
</feature>
<feature type="binding site" evidence="8 11">
    <location>
        <position position="147"/>
    </location>
    <ligand>
        <name>Zn(2+)</name>
        <dbReference type="ChEBI" id="CHEBI:29105"/>
        <label>2</label>
    </ligand>
</feature>
<feature type="binding site" evidence="8 11">
    <location>
        <position position="156"/>
    </location>
    <ligand>
        <name>Zn(2+)</name>
        <dbReference type="ChEBI" id="CHEBI:29105"/>
        <label>2</label>
    </ligand>
</feature>
<feature type="binding site" evidence="8 11">
    <location>
        <position position="162"/>
    </location>
    <ligand>
        <name>Zn(2+)</name>
        <dbReference type="ChEBI" id="CHEBI:29105"/>
        <label>2</label>
    </ligand>
</feature>
<feature type="binding site" evidence="8 11">
    <location>
        <position position="166"/>
    </location>
    <ligand>
        <name>Zn(2+)</name>
        <dbReference type="ChEBI" id="CHEBI:29105"/>
        <label>2</label>
    </ligand>
</feature>
<feature type="mutagenesis site" description="In zu148; failure to express the apx-1 protein from the maternally supplied pool of apx-1 mRNA. The first two germline blastomeres P0 and P1 appear normal, but P2 has less cleavage asymmetry than in wild type and P3 has little to no cleavage asymmetry. P2, P3, and P4 have abnormally short cell cycle periods. Defect in P2 to ABp signaling. Diminished levels of cytoplasmic and P granule associated pie-1 and mex-1 protein in the daughters of P3. Expression of glp-1 in all four blastomeres including the posterior EMS and P2 blastomeres, instead of only in the ABa and ABp blastomeres at the four-cell stage. Abolished asymmetry of neg-1 expression in AB descendants. Embryos lack several cell types including intestinal and pharyngeal cells and germ cell progenitors. Failure to hatch due to defects in body morphogenesis." evidence="5 6 7">
    <location>
        <begin position="118"/>
        <end position="264"/>
    </location>
</feature>
<feature type="mutagenesis site" description="In ne-51; disrupts binding to glp-1 3' UTR." evidence="3">
    <original>C</original>
    <variation>Y</variation>
    <location>
        <position position="147"/>
    </location>
</feature>
<feature type="strand" evidence="15">
    <location>
        <begin position="98"/>
        <end position="103"/>
    </location>
</feature>
<feature type="helix" evidence="15">
    <location>
        <begin position="105"/>
        <end position="109"/>
    </location>
</feature>
<feature type="helix" evidence="15">
    <location>
        <begin position="116"/>
        <end position="118"/>
    </location>
</feature>
<feature type="strand" evidence="15">
    <location>
        <begin position="120"/>
        <end position="124"/>
    </location>
</feature>
<feature type="turn" evidence="15">
    <location>
        <begin position="125"/>
        <end position="127"/>
    </location>
</feature>
<feature type="helix" evidence="15">
    <location>
        <begin position="148"/>
        <end position="152"/>
    </location>
</feature>
<feature type="helix" evidence="15">
    <location>
        <begin position="159"/>
        <end position="161"/>
    </location>
</feature>
<feature type="strand" evidence="15">
    <location>
        <begin position="163"/>
        <end position="165"/>
    </location>
</feature>
<reference evidence="10" key="1">
    <citation type="journal article" date="1999" name="Development">
        <title>pos-1 encodes a cytoplasmic zinc-finger protein essential for germline specification in C. elegans.</title>
        <authorList>
            <person name="Tabara H."/>
            <person name="Hill R.J."/>
            <person name="Mello C.C."/>
            <person name="Priess J.R."/>
            <person name="Kohara Y."/>
        </authorList>
    </citation>
    <scope>NUCLEOTIDE SEQUENCE [MRNA]</scope>
    <scope>FUNCTION</scope>
    <scope>SUBCELLULAR LOCATION</scope>
    <scope>DEVELOPMENTAL STAGE</scope>
    <scope>DISRUPTION PHENOTYPE</scope>
    <scope>MUTAGENESIS OF 118-GLN--HIS-264</scope>
</reference>
<reference evidence="12" key="2">
    <citation type="journal article" date="1998" name="Science">
        <title>Genome sequence of the nematode C. elegans: a platform for investigating biology.</title>
        <authorList>
            <consortium name="The C. elegans sequencing consortium"/>
        </authorList>
    </citation>
    <scope>NUCLEOTIDE SEQUENCE [LARGE SCALE GENOMIC DNA]</scope>
    <source>
        <strain evidence="12">Bristol N2</strain>
    </source>
</reference>
<reference key="3">
    <citation type="journal article" date="2003" name="Development">
        <title>Translational control of maternal glp-1 mRNA by POS-1 and its interacting protein SPN-4 in Caenorhabditis elegans.</title>
        <authorList>
            <person name="Ogura K."/>
            <person name="Kishimoto N."/>
            <person name="Mitani S."/>
            <person name="Gengyo-Ando K."/>
            <person name="Kohara Y."/>
        </authorList>
    </citation>
    <scope>FUNCTION</scope>
    <scope>INTERACTION WITH SPN-4</scope>
    <scope>DISRUPTION PHENOTYPE</scope>
    <scope>MUTAGENESIS OF 118-GLN--HIS-264 AND CYS-147</scope>
</reference>
<reference key="4">
    <citation type="journal article" date="2008" name="RNA">
        <title>RNA target specificity of the embryonic cell fate determinant POS-1.</title>
        <authorList>
            <person name="Farley B.M."/>
            <person name="Pagano J.M."/>
            <person name="Ryder S.P."/>
        </authorList>
    </citation>
    <scope>FUNCTION</scope>
    <scope>SUBUNIT</scope>
</reference>
<reference key="5">
    <citation type="journal article" date="2012" name="Mol. Biol. Cell">
        <title>POS-1 and GLD-1 repress glp-1 translation through a conserved binding-site cluster.</title>
        <authorList>
            <person name="Farley B.M."/>
            <person name="Ryder S.P."/>
        </authorList>
    </citation>
    <scope>FUNCTION</scope>
</reference>
<reference key="6">
    <citation type="journal article" date="2015" name="Dev. Cell">
        <title>POS-1 Promotes Endo-mesoderm Development by Inhibiting the Cytoplasmic Polyadenylation of neg-1 mRNA.</title>
        <authorList>
            <person name="Elewa A."/>
            <person name="Shirayama M."/>
            <person name="Kaymak E."/>
            <person name="Harrison P.F."/>
            <person name="Powell D.R."/>
            <person name="Du Z."/>
            <person name="Chute C.D."/>
            <person name="Woolf H."/>
            <person name="Yi D."/>
            <person name="Ishidate T."/>
            <person name="Srinivasan J."/>
            <person name="Bao Z."/>
            <person name="Beilharz T.H."/>
            <person name="Ryder S.P."/>
            <person name="Mello C.C."/>
        </authorList>
    </citation>
    <scope>FUNCTION</scope>
    <scope>DISRUPTION PHENOTYPE</scope>
    <scope>MUTAGENESIS OF 118-GLN--HIS-264</scope>
</reference>
<reference evidence="14" key="7">
    <citation type="submission" date="2019-02" db="PDB data bank">
        <title>Solution structure of POS-1, a CCCH-type Tandem Zinc Finger protein from C. elegans.</title>
        <authorList>
            <person name="Ertekin A."/>
            <person name="Massi F."/>
        </authorList>
    </citation>
    <scope>STRUCTURE BY NMR OF 97-173 IN COMPLEX WITH ZINC</scope>
</reference>
<proteinExistence type="evidence at protein level"/>
<name>POS1_CAEEL</name>
<dbReference type="EMBL" id="AB006208">
    <property type="protein sequence ID" value="BAA33854.1"/>
    <property type="molecule type" value="mRNA"/>
</dbReference>
<dbReference type="EMBL" id="BX284605">
    <property type="protein sequence ID" value="CCD70802.1"/>
    <property type="molecule type" value="Genomic_DNA"/>
</dbReference>
<dbReference type="PIR" id="T37246">
    <property type="entry name" value="T37246"/>
</dbReference>
<dbReference type="RefSeq" id="NP_001379937.1">
    <property type="nucleotide sequence ID" value="NM_001392561.1"/>
</dbReference>
<dbReference type="RefSeq" id="NP_505172.1">
    <property type="nucleotide sequence ID" value="NM_072771.5"/>
</dbReference>
<dbReference type="PDB" id="6NZL">
    <property type="method" value="NMR"/>
    <property type="chains" value="A=97-173"/>
</dbReference>
<dbReference type="PDBsum" id="6NZL"/>
<dbReference type="BMRB" id="G5EF15"/>
<dbReference type="SMR" id="G5EF15"/>
<dbReference type="FunCoup" id="G5EF15">
    <property type="interactions" value="1258"/>
</dbReference>
<dbReference type="IntAct" id="G5EF15">
    <property type="interactions" value="1"/>
</dbReference>
<dbReference type="STRING" id="6239.F52E1.1.1"/>
<dbReference type="BindingDB" id="G5EF15"/>
<dbReference type="ChEMBL" id="CHEMBL1293304"/>
<dbReference type="DrugCentral" id="G5EF15"/>
<dbReference type="PaxDb" id="6239-F52E1.1"/>
<dbReference type="PeptideAtlas" id="G5EF15"/>
<dbReference type="EnsemblMetazoa" id="F52E1.1.1">
    <property type="protein sequence ID" value="F52E1.1.1"/>
    <property type="gene ID" value="WBGene00004078"/>
</dbReference>
<dbReference type="GeneID" id="179224"/>
<dbReference type="AGR" id="WB:WBGene00004078"/>
<dbReference type="WormBase" id="F52E1.1">
    <property type="protein sequence ID" value="CE04629"/>
    <property type="gene ID" value="WBGene00004078"/>
    <property type="gene designation" value="pos-1"/>
</dbReference>
<dbReference type="eggNOG" id="KOG1677">
    <property type="taxonomic scope" value="Eukaryota"/>
</dbReference>
<dbReference type="GeneTree" id="ENSGT00940000166550"/>
<dbReference type="HOGENOM" id="CLU_092172_0_0_1"/>
<dbReference type="InParanoid" id="G5EF15"/>
<dbReference type="OMA" id="SYGDQCR"/>
<dbReference type="OrthoDB" id="410307at2759"/>
<dbReference type="Reactome" id="R-CEL-450385">
    <property type="pathway name" value="Butyrate Response Factor 1 (BRF1) binds and destabilizes mRNA"/>
</dbReference>
<dbReference type="Reactome" id="R-CEL-450513">
    <property type="pathway name" value="Tristetraprolin (TTP, ZFP36) binds and destabilizes mRNA"/>
</dbReference>
<dbReference type="CD-CODE" id="73A75392">
    <property type="entry name" value="P-granule"/>
</dbReference>
<dbReference type="PRO" id="PR:G5EF15"/>
<dbReference type="Proteomes" id="UP000001940">
    <property type="component" value="Chromosome V"/>
</dbReference>
<dbReference type="Bgee" id="WBGene00004078">
    <property type="expression patterns" value="Expressed in germ line (C elegans) and 14 other cell types or tissues"/>
</dbReference>
<dbReference type="GO" id="GO:0005737">
    <property type="term" value="C:cytoplasm"/>
    <property type="evidence" value="ECO:0000314"/>
    <property type="project" value="WormBase"/>
</dbReference>
<dbReference type="GO" id="GO:0005829">
    <property type="term" value="C:cytosol"/>
    <property type="evidence" value="ECO:0000318"/>
    <property type="project" value="GO_Central"/>
</dbReference>
<dbReference type="GO" id="GO:0043186">
    <property type="term" value="C:P granule"/>
    <property type="evidence" value="ECO:0000314"/>
    <property type="project" value="WormBase"/>
</dbReference>
<dbReference type="GO" id="GO:0003730">
    <property type="term" value="F:mRNA 3'-UTR binding"/>
    <property type="evidence" value="ECO:0000314"/>
    <property type="project" value="WormBase"/>
</dbReference>
<dbReference type="GO" id="GO:0008266">
    <property type="term" value="F:poly(U) RNA binding"/>
    <property type="evidence" value="ECO:0000314"/>
    <property type="project" value="WormBase"/>
</dbReference>
<dbReference type="GO" id="GO:0003727">
    <property type="term" value="F:single-stranded RNA binding"/>
    <property type="evidence" value="ECO:0000314"/>
    <property type="project" value="WormBase"/>
</dbReference>
<dbReference type="GO" id="GO:0003714">
    <property type="term" value="F:transcription corepressor activity"/>
    <property type="evidence" value="ECO:0000314"/>
    <property type="project" value="WormBase"/>
</dbReference>
<dbReference type="GO" id="GO:0008270">
    <property type="term" value="F:zinc ion binding"/>
    <property type="evidence" value="ECO:0007669"/>
    <property type="project" value="UniProtKB-KW"/>
</dbReference>
<dbReference type="GO" id="GO:0001708">
    <property type="term" value="P:cell fate specification"/>
    <property type="evidence" value="ECO:0000315"/>
    <property type="project" value="WormBase"/>
</dbReference>
<dbReference type="GO" id="GO:0009792">
    <property type="term" value="P:embryo development ending in birth or egg hatching"/>
    <property type="evidence" value="ECO:0000315"/>
    <property type="project" value="WormBase"/>
</dbReference>
<dbReference type="GO" id="GO:0009880">
    <property type="term" value="P:embryonic pattern specification"/>
    <property type="evidence" value="ECO:0000315"/>
    <property type="project" value="WormBase"/>
</dbReference>
<dbReference type="GO" id="GO:0000122">
    <property type="term" value="P:negative regulation of transcription by RNA polymerase II"/>
    <property type="evidence" value="ECO:0000314"/>
    <property type="project" value="WormBase"/>
</dbReference>
<dbReference type="GO" id="GO:0006417">
    <property type="term" value="P:regulation of translation"/>
    <property type="evidence" value="ECO:0007669"/>
    <property type="project" value="UniProtKB-KW"/>
</dbReference>
<dbReference type="FunFam" id="4.10.1000.10:FF:000001">
    <property type="entry name" value="zinc finger CCCH domain-containing protein 15-like"/>
    <property type="match status" value="1"/>
</dbReference>
<dbReference type="FunFam" id="4.10.1000.10:FF:000018">
    <property type="entry name" value="Zinc finger protein"/>
    <property type="match status" value="1"/>
</dbReference>
<dbReference type="Gene3D" id="6.10.250.3220">
    <property type="match status" value="1"/>
</dbReference>
<dbReference type="Gene3D" id="4.10.1000.10">
    <property type="entry name" value="Zinc finger, CCCH-type"/>
    <property type="match status" value="1"/>
</dbReference>
<dbReference type="InterPro" id="IPR045877">
    <property type="entry name" value="ZFP36-like"/>
</dbReference>
<dbReference type="InterPro" id="IPR000571">
    <property type="entry name" value="Znf_CCCH"/>
</dbReference>
<dbReference type="InterPro" id="IPR036855">
    <property type="entry name" value="Znf_CCCH_sf"/>
</dbReference>
<dbReference type="PANTHER" id="PTHR12547:SF110">
    <property type="entry name" value="C3H1-TYPE DOMAIN-CONTAINING PROTEIN-RELATED"/>
    <property type="match status" value="1"/>
</dbReference>
<dbReference type="PANTHER" id="PTHR12547">
    <property type="entry name" value="CCCH ZINC FINGER/TIS11-RELATED"/>
    <property type="match status" value="1"/>
</dbReference>
<dbReference type="Pfam" id="PF00642">
    <property type="entry name" value="zf-CCCH"/>
    <property type="match status" value="2"/>
</dbReference>
<dbReference type="SMART" id="SM00356">
    <property type="entry name" value="ZnF_C3H1"/>
    <property type="match status" value="2"/>
</dbReference>
<dbReference type="SUPFAM" id="SSF90229">
    <property type="entry name" value="CCCH zinc finger"/>
    <property type="match status" value="2"/>
</dbReference>
<dbReference type="PROSITE" id="PS50103">
    <property type="entry name" value="ZF_C3H1"/>
    <property type="match status" value="2"/>
</dbReference>
<evidence type="ECO:0000255" key="1">
    <source>
        <dbReference type="PROSITE-ProRule" id="PRU00723"/>
    </source>
</evidence>
<evidence type="ECO:0000256" key="2">
    <source>
        <dbReference type="SAM" id="MobiDB-lite"/>
    </source>
</evidence>
<evidence type="ECO:0000269" key="3">
    <source>
    </source>
</evidence>
<evidence type="ECO:0000269" key="4">
    <source>
    </source>
</evidence>
<evidence type="ECO:0000269" key="5">
    <source>
    </source>
</evidence>
<evidence type="ECO:0000269" key="6">
    <source>
    </source>
</evidence>
<evidence type="ECO:0000269" key="7">
    <source>
    </source>
</evidence>
<evidence type="ECO:0000269" key="8">
    <source ref="7"/>
</evidence>
<evidence type="ECO:0000305" key="9"/>
<evidence type="ECO:0000312" key="10">
    <source>
        <dbReference type="EMBL" id="BAA33854.1"/>
    </source>
</evidence>
<evidence type="ECO:0000312" key="11">
    <source>
        <dbReference type="PDB" id="6NZL"/>
    </source>
</evidence>
<evidence type="ECO:0000312" key="12">
    <source>
        <dbReference type="Proteomes" id="UP000001940"/>
    </source>
</evidence>
<evidence type="ECO:0000312" key="13">
    <source>
        <dbReference type="WormBase" id="F52E1.1"/>
    </source>
</evidence>
<evidence type="ECO:0007744" key="14">
    <source>
        <dbReference type="PDB" id="6NZL"/>
    </source>
</evidence>
<evidence type="ECO:0007829" key="15">
    <source>
        <dbReference type="PDB" id="6NZL"/>
    </source>
</evidence>
<comment type="function">
    <text evidence="3 4 5 6 7">RNA-binding protein that coordinates cell fate specification and differentiation during early embryogenesis (PubMed:23034181, PubMed:9834181). Binds to a consensus pos-1 recognition element (PRE) consisting of the sequence 5'-UA(U 2-3)RGD(N 1-3)G-3', where R is any purine, D is A, G, or U, and N is any base (PubMed:18952820, PubMed:23034181). The PRE motif is found within the 3' untranslated region of many maternal transcripts required for early development (PubMed:18952820). Binds to the 3' untranslated region (UTR) of Notch receptor homolog glp-1, thereby repressing glp-1 translation in the posterior blastomeres in the embryo (PubMed:12702662, PubMed:23034181). Binding to glp-1 3' UTR excludes cell fate regulator gld-1 binding to an overlapping binding site in the glp-1 3' UTR (PubMed:23034181). Binds to the neg-1 3'UTR thereby opposing neg-1 expression and cytoplasmic polyadenylation of the neg-1 mRNA poly(A) tail promoted by gld-2 and gld-3 (PubMed:26096734). By inhibiting the cytoplasmic lengthening of neg-1 mRNA, restricts the accumulation of neg-1 protein and promotes endo-mesoderm development in anterior blastomeres (PubMed:26096734). Essential for germline specification (PubMed:9834181).</text>
</comment>
<comment type="subunit">
    <text evidence="4">Monomer.</text>
</comment>
<comment type="subcellular location">
    <subcellularLocation>
        <location evidence="7">Cytoplasm</location>
    </subcellularLocation>
    <text evidence="7">Localized to P granules in the germline blastomeres P1, P2, P3 and P4.</text>
</comment>
<comment type="developmental stage">
    <text evidence="7">Distributed asymmetrically after the first cleavage of the embryo: expression is higher in posterior blastomere (germline blastomere P1) of a 2-cell stage embryo than in the anterior blastomere (somatic blastomere AB) (at protein level) (PubMed:9834181). Initially present at similar levels in both daughters of P1, but persists at high levels only in the germline daughter, P2 (at protein level) (PubMed:9834181). The asymmetrical distribution pattern is seen at each of the subsequent divisions of germline blastomeres (PubMed:9834181). After the division of the final germline blastomere P4, not detectable in either daughter cell (at protein level) (PubMed:9834181). Present predominantly in the germ precursors (PubMed:9834181). Distributed uniformly in oocytes and in newly fertilized embryos (PubMed:9834181). Expressed in immature gonads of fourth stage larvae (PubMed:9834181).</text>
</comment>
<comment type="disruption phenotype">
    <text evidence="3 6 7">RNAi-mediated interference leads to maternal-effect lethality (PubMed:9834181). Expression of glp-1 in all four blastomeres including the posterior EMS and P2 blastomeres, instead of only in the ABa and ABp blastomeres at the four-cell stage (PubMed:12702662). Abolished asymmetry in neg-1 expression in AB descendants (PubMed:26096734).</text>
</comment>
<sequence length="264" mass="29830">MADNDFLSGEAIMVFKKEILDSHSDFTRSLSHQSASPEAYDQENVFSQDFQPFMKQDKETQNSASQPTSEQSLANRDPCTVPDDLREEMMRQRRKEDAFKTALCDAYKRSQACSYGDQCRFAHGVHELRLPMNPRGRNHPKYKTVLCDKFSMTGNCKYGTRCQFIHKIVDGNAAKLASGAHANTSSKSPARNAAAHNHSLFVPQGSTDRSMDLNQSLPIRQSDLVRAFARATRLDVSGYNSTAQLAQYFESQFQRIQQLSSHHH</sequence>